<proteinExistence type="inferred from homology"/>
<evidence type="ECO:0000305" key="1"/>
<organism>
    <name type="scientific">Azotobacter vinelandii</name>
    <dbReference type="NCBI Taxonomy" id="354"/>
    <lineage>
        <taxon>Bacteria</taxon>
        <taxon>Pseudomonadati</taxon>
        <taxon>Pseudomonadota</taxon>
        <taxon>Gammaproteobacteria</taxon>
        <taxon>Pseudomonadales</taxon>
        <taxon>Pseudomonadaceae</taxon>
        <taxon>Azotobacter</taxon>
    </lineage>
</organism>
<dbReference type="EMBL" id="X63650">
    <property type="protein sequence ID" value="CAA45182.1"/>
    <property type="molecule type" value="Genomic_DNA"/>
</dbReference>
<dbReference type="SMR" id="P31878"/>
<dbReference type="GO" id="GO:0016151">
    <property type="term" value="F:nickel cation binding"/>
    <property type="evidence" value="ECO:0007669"/>
    <property type="project" value="InterPro"/>
</dbReference>
<dbReference type="Gene3D" id="1.10.645.10">
    <property type="entry name" value="Cytochrome-c3 Hydrogenase, chain B"/>
    <property type="match status" value="2"/>
</dbReference>
<dbReference type="InterPro" id="IPR001501">
    <property type="entry name" value="Ni-dep_hyd_lsu"/>
</dbReference>
<dbReference type="InterPro" id="IPR029014">
    <property type="entry name" value="NiFe-Hase_large"/>
</dbReference>
<dbReference type="InterPro" id="IPR050867">
    <property type="entry name" value="NiFe/NiFeSe_hydrgnase_LSU"/>
</dbReference>
<dbReference type="PANTHER" id="PTHR42958:SF4">
    <property type="entry name" value="HYDROGENASE EXPRESSION_FORMATION PROTEIN HUPK"/>
    <property type="match status" value="1"/>
</dbReference>
<dbReference type="PANTHER" id="PTHR42958">
    <property type="entry name" value="HYDROGENASE-2 LARGE CHAIN"/>
    <property type="match status" value="1"/>
</dbReference>
<dbReference type="Pfam" id="PF00374">
    <property type="entry name" value="NiFeSe_Hases"/>
    <property type="match status" value="1"/>
</dbReference>
<dbReference type="SUPFAM" id="SSF56762">
    <property type="entry name" value="HydB/Nqo4-like"/>
    <property type="match status" value="1"/>
</dbReference>
<feature type="chain" id="PRO_0000201430" description="Hydrogenase expression/formation protein HupK">
    <location>
        <begin position="1"/>
        <end position="342"/>
    </location>
</feature>
<name>HUPK_AZOVI</name>
<accession>P31878</accession>
<sequence length="342" mass="36377">MAGRLHVEVRLQDGVIRAVDTRLQRPLPQISRLLVGQTAEAALRRLPLLFGLCAAAQQVAALRALERAAGWAAIAEVEEGRTRLGELESIRESLLRLVQVWELPVPLERLKALLALCRRAAARLQALTAFRAAPLPADAELEGTLAALAAAWADLQPPAPADWLRPRLDRWQEVALGGPPPQAFTADELPALLAQLRASDARAEIAGQPRLGGPAASAGAQATASAQIEQHVGALLRRTAQAIDSLQSPPAPPAVAGLAAGEGVGLARTARGWLLHRVCLDDGAVGTWQLLAPTDWNFHADGPLRRRLCGVRVAAGEVEALLRELILALDPCVAFEVKIVHA</sequence>
<protein>
    <recommendedName>
        <fullName>Hydrogenase expression/formation protein HupK</fullName>
    </recommendedName>
</protein>
<reference key="1">
    <citation type="journal article" date="1992" name="Biochim. Biophys. Acta">
        <title>Identification of six open reading frames from a region of the Azotobacter vinelandii genome likely involved in dihydrogen metabolism.</title>
        <authorList>
            <person name="Chen J.C."/>
            <person name="Mortenson L.E."/>
        </authorList>
    </citation>
    <scope>NUCLEOTIDE SEQUENCE [GENOMIC DNA]</scope>
    <source>
        <strain>ATCC 13705 / OP1 / DSM 366 / NCIMB 11614 / LMG 3878 / UW</strain>
    </source>
</reference>
<comment type="similarity">
    <text evidence="1">Belongs to the HupK family.</text>
</comment>
<gene>
    <name type="primary">hupK</name>
</gene>